<feature type="peptide" id="PRO_0000043589" description="Apidaecin">
    <location>
        <begin position="1"/>
        <end position="17"/>
    </location>
</feature>
<keyword id="KW-0002">3D-structure</keyword>
<keyword id="KW-0044">Antibiotic</keyword>
<keyword id="KW-0929">Antimicrobial</keyword>
<keyword id="KW-0903">Direct protein sequencing</keyword>
<keyword id="KW-0391">Immunity</keyword>
<keyword id="KW-0399">Innate immunity</keyword>
<keyword id="KW-0964">Secreted</keyword>
<reference key="1">
    <citation type="journal article" date="1997" name="Insect Biochem. Mol. Biol.">
        <title>Novel antibacterial peptides isolated from a European bumblebee, Bombus pascuorum (Hymenoptera, Apoidea).</title>
        <authorList>
            <person name="Rees J.A."/>
            <person name="Moniatte M."/>
            <person name="Bulet P."/>
        </authorList>
    </citation>
    <scope>PROTEIN SEQUENCE</scope>
    <scope>FUNCTION</scope>
    <scope>SUBCELLULAR LOCATION</scope>
    <scope>INDUCTION</scope>
    <source>
        <tissue>Hemolymph</tissue>
    </source>
</reference>
<name>APD_BOMPA</name>
<proteinExistence type="evidence at protein level"/>
<comment type="function">
    <text evidence="1">Antibacterial peptide active against Gram-negative bacteria.</text>
</comment>
<comment type="subcellular location">
    <subcellularLocation>
        <location evidence="1">Secreted</location>
    </subcellularLocation>
    <text evidence="1">Present in hemolymph.</text>
</comment>
<comment type="induction">
    <text evidence="1">By bacterial infection.</text>
</comment>
<comment type="similarity">
    <text evidence="3">Belongs to the apidaecin family.</text>
</comment>
<organism>
    <name type="scientific">Bombus pascuorum</name>
    <name type="common">Common carder bumblebee</name>
    <dbReference type="NCBI Taxonomy" id="65598"/>
    <lineage>
        <taxon>Eukaryota</taxon>
        <taxon>Metazoa</taxon>
        <taxon>Ecdysozoa</taxon>
        <taxon>Arthropoda</taxon>
        <taxon>Hexapoda</taxon>
        <taxon>Insecta</taxon>
        <taxon>Pterygota</taxon>
        <taxon>Neoptera</taxon>
        <taxon>Endopterygota</taxon>
        <taxon>Hymenoptera</taxon>
        <taxon>Apocrita</taxon>
        <taxon>Aculeata</taxon>
        <taxon>Apoidea</taxon>
        <taxon>Anthophila</taxon>
        <taxon>Apidae</taxon>
        <taxon>Bombus</taxon>
        <taxon>Thoracobombus</taxon>
    </lineage>
</organism>
<accession>P81464</accession>
<dbReference type="PDB" id="4F00">
    <property type="method" value="X-ray"/>
    <property type="resolution" value="1.95 A"/>
    <property type="chains" value="B=2-10"/>
</dbReference>
<dbReference type="PDBsum" id="4F00"/>
<dbReference type="SMR" id="P81464"/>
<dbReference type="EvolutionaryTrace" id="P81464"/>
<dbReference type="GO" id="GO:0005576">
    <property type="term" value="C:extracellular region"/>
    <property type="evidence" value="ECO:0007669"/>
    <property type="project" value="UniProtKB-SubCell"/>
</dbReference>
<dbReference type="GO" id="GO:0042742">
    <property type="term" value="P:defense response to bacterium"/>
    <property type="evidence" value="ECO:0007669"/>
    <property type="project" value="UniProtKB-KW"/>
</dbReference>
<dbReference type="GO" id="GO:0045087">
    <property type="term" value="P:innate immune response"/>
    <property type="evidence" value="ECO:0007669"/>
    <property type="project" value="UniProtKB-KW"/>
</dbReference>
<dbReference type="InterPro" id="IPR004828">
    <property type="entry name" value="Apidaecin"/>
</dbReference>
<dbReference type="Pfam" id="PF00807">
    <property type="entry name" value="Apidaecin"/>
    <property type="match status" value="1"/>
</dbReference>
<protein>
    <recommendedName>
        <fullName evidence="2">Apidaecin</fullName>
    </recommendedName>
</protein>
<sequence length="17" mass="1963">GNRPVYIPPPRPPHPRL</sequence>
<evidence type="ECO:0000269" key="1">
    <source>
    </source>
</evidence>
<evidence type="ECO:0000303" key="2">
    <source>
    </source>
</evidence>
<evidence type="ECO:0000305" key="3"/>